<sequence length="179" mass="20302">MAKLHDYYKDEVVKKLMTEFNYNSVMQVPRVEKITLNMGVGEAIADKKLLDNAAADLAAISGQKPLITKARKSVAGFKIRQGYPIGCKVTLRGERMWEFFERLITIAVPRIRDFRGLSAKSFDGRGNYSMGVREQIIFPEIDYDKVDRVRGLDITITTTAKSDEEGRALLAAFDFPFRK</sequence>
<feature type="chain" id="PRO_1000214626" description="Large ribosomal subunit protein uL5">
    <location>
        <begin position="1"/>
        <end position="179"/>
    </location>
</feature>
<feature type="modified residue" description="N6-acetyllysine" evidence="1">
    <location>
        <position position="3"/>
    </location>
</feature>
<evidence type="ECO:0000255" key="1">
    <source>
        <dbReference type="HAMAP-Rule" id="MF_01333"/>
    </source>
</evidence>
<evidence type="ECO:0000305" key="2"/>
<name>RL5_ECOBW</name>
<dbReference type="EMBL" id="CP001396">
    <property type="protein sequence ID" value="ACR61875.1"/>
    <property type="molecule type" value="Genomic_DNA"/>
</dbReference>
<dbReference type="RefSeq" id="WP_001096200.1">
    <property type="nucleotide sequence ID" value="NC_012759.1"/>
</dbReference>
<dbReference type="SMR" id="C4ZUG3"/>
<dbReference type="GeneID" id="93778679"/>
<dbReference type="KEGG" id="ebw:BWG_2999"/>
<dbReference type="HOGENOM" id="CLU_061015_2_1_6"/>
<dbReference type="GO" id="GO:1990904">
    <property type="term" value="C:ribonucleoprotein complex"/>
    <property type="evidence" value="ECO:0007669"/>
    <property type="project" value="UniProtKB-KW"/>
</dbReference>
<dbReference type="GO" id="GO:0005840">
    <property type="term" value="C:ribosome"/>
    <property type="evidence" value="ECO:0007669"/>
    <property type="project" value="UniProtKB-KW"/>
</dbReference>
<dbReference type="GO" id="GO:0019843">
    <property type="term" value="F:rRNA binding"/>
    <property type="evidence" value="ECO:0007669"/>
    <property type="project" value="UniProtKB-UniRule"/>
</dbReference>
<dbReference type="GO" id="GO:0003735">
    <property type="term" value="F:structural constituent of ribosome"/>
    <property type="evidence" value="ECO:0007669"/>
    <property type="project" value="InterPro"/>
</dbReference>
<dbReference type="GO" id="GO:0000049">
    <property type="term" value="F:tRNA binding"/>
    <property type="evidence" value="ECO:0007669"/>
    <property type="project" value="UniProtKB-UniRule"/>
</dbReference>
<dbReference type="GO" id="GO:0006412">
    <property type="term" value="P:translation"/>
    <property type="evidence" value="ECO:0007669"/>
    <property type="project" value="UniProtKB-UniRule"/>
</dbReference>
<dbReference type="FunFam" id="3.30.1440.10:FF:000001">
    <property type="entry name" value="50S ribosomal protein L5"/>
    <property type="match status" value="1"/>
</dbReference>
<dbReference type="Gene3D" id="3.30.1440.10">
    <property type="match status" value="1"/>
</dbReference>
<dbReference type="HAMAP" id="MF_01333_B">
    <property type="entry name" value="Ribosomal_uL5_B"/>
    <property type="match status" value="1"/>
</dbReference>
<dbReference type="InterPro" id="IPR002132">
    <property type="entry name" value="Ribosomal_uL5"/>
</dbReference>
<dbReference type="InterPro" id="IPR020930">
    <property type="entry name" value="Ribosomal_uL5_bac-type"/>
</dbReference>
<dbReference type="InterPro" id="IPR031309">
    <property type="entry name" value="Ribosomal_uL5_C"/>
</dbReference>
<dbReference type="InterPro" id="IPR020929">
    <property type="entry name" value="Ribosomal_uL5_CS"/>
</dbReference>
<dbReference type="InterPro" id="IPR022803">
    <property type="entry name" value="Ribosomal_uL5_dom_sf"/>
</dbReference>
<dbReference type="InterPro" id="IPR031310">
    <property type="entry name" value="Ribosomal_uL5_N"/>
</dbReference>
<dbReference type="NCBIfam" id="NF000585">
    <property type="entry name" value="PRK00010.1"/>
    <property type="match status" value="1"/>
</dbReference>
<dbReference type="PANTHER" id="PTHR11994">
    <property type="entry name" value="60S RIBOSOMAL PROTEIN L11-RELATED"/>
    <property type="match status" value="1"/>
</dbReference>
<dbReference type="Pfam" id="PF00281">
    <property type="entry name" value="Ribosomal_L5"/>
    <property type="match status" value="1"/>
</dbReference>
<dbReference type="Pfam" id="PF00673">
    <property type="entry name" value="Ribosomal_L5_C"/>
    <property type="match status" value="1"/>
</dbReference>
<dbReference type="PIRSF" id="PIRSF002161">
    <property type="entry name" value="Ribosomal_L5"/>
    <property type="match status" value="1"/>
</dbReference>
<dbReference type="SUPFAM" id="SSF55282">
    <property type="entry name" value="RL5-like"/>
    <property type="match status" value="1"/>
</dbReference>
<dbReference type="PROSITE" id="PS00358">
    <property type="entry name" value="RIBOSOMAL_L5"/>
    <property type="match status" value="1"/>
</dbReference>
<comment type="function">
    <text evidence="1">This is one of the proteins that bind and probably mediate the attachment of the 5S RNA into the large ribosomal subunit, where it forms part of the central protuberance. In the 70S ribosome it contacts protein S13 of the 30S subunit (bridge B1b), connecting the 2 subunits; this bridge is implicated in subunit movement. Contacts the P site tRNA; the 5S rRNA and some of its associated proteins might help stabilize positioning of ribosome-bound tRNAs.</text>
</comment>
<comment type="subunit">
    <text evidence="1">Part of the 50S ribosomal subunit; part of the 5S rRNA/L5/L18/L25 subcomplex. Contacts the 5S rRNA and the P site tRNA. Forms a bridge to the 30S subunit in the 70S ribosome.</text>
</comment>
<comment type="similarity">
    <text evidence="1">Belongs to the universal ribosomal protein uL5 family.</text>
</comment>
<reference key="1">
    <citation type="journal article" date="2009" name="J. Bacteriol.">
        <title>Genomic sequencing reveals regulatory mutations and recombinational events in the widely used MC4100 lineage of Escherichia coli K-12.</title>
        <authorList>
            <person name="Ferenci T."/>
            <person name="Zhou Z."/>
            <person name="Betteridge T."/>
            <person name="Ren Y."/>
            <person name="Liu Y."/>
            <person name="Feng L."/>
            <person name="Reeves P.R."/>
            <person name="Wang L."/>
        </authorList>
    </citation>
    <scope>NUCLEOTIDE SEQUENCE [LARGE SCALE GENOMIC DNA]</scope>
    <source>
        <strain>K12 / MC4100 / BW2952</strain>
    </source>
</reference>
<protein>
    <recommendedName>
        <fullName evidence="1">Large ribosomal subunit protein uL5</fullName>
    </recommendedName>
    <alternativeName>
        <fullName evidence="2">50S ribosomal protein L5</fullName>
    </alternativeName>
</protein>
<keyword id="KW-0007">Acetylation</keyword>
<keyword id="KW-0687">Ribonucleoprotein</keyword>
<keyword id="KW-0689">Ribosomal protein</keyword>
<keyword id="KW-0694">RNA-binding</keyword>
<keyword id="KW-0699">rRNA-binding</keyword>
<keyword id="KW-0820">tRNA-binding</keyword>
<gene>
    <name evidence="1" type="primary">rplE</name>
    <name type="ordered locus">BWG_2999</name>
</gene>
<accession>C4ZUG3</accession>
<organism>
    <name type="scientific">Escherichia coli (strain K12 / MC4100 / BW2952)</name>
    <dbReference type="NCBI Taxonomy" id="595496"/>
    <lineage>
        <taxon>Bacteria</taxon>
        <taxon>Pseudomonadati</taxon>
        <taxon>Pseudomonadota</taxon>
        <taxon>Gammaproteobacteria</taxon>
        <taxon>Enterobacterales</taxon>
        <taxon>Enterobacteriaceae</taxon>
        <taxon>Escherichia</taxon>
    </lineage>
</organism>
<proteinExistence type="inferred from homology"/>